<feature type="chain" id="PRO_0000073029" description="Pancreatic secretory trypsin inhibitor">
    <location>
        <begin position="1"/>
        <end position="69"/>
    </location>
</feature>
<feature type="domain" description="Kazal-like" evidence="1">
    <location>
        <begin position="8"/>
        <end position="65"/>
    </location>
</feature>
<feature type="site" description="Reactive bond">
    <location>
        <begin position="25"/>
        <end position="26"/>
    </location>
</feature>
<feature type="disulfide bond" evidence="1">
    <location>
        <begin position="14"/>
        <end position="45"/>
    </location>
</feature>
<feature type="disulfide bond" evidence="1">
    <location>
        <begin position="23"/>
        <end position="42"/>
    </location>
</feature>
<feature type="disulfide bond" evidence="1">
    <location>
        <begin position="31"/>
        <end position="63"/>
    </location>
</feature>
<sequence length="69" mass="7656">EPDSAADTGTEAACSNYDLKKGCAKIFDPVCGTDNILYSNECLLCFQNLQRKTNVRIKRRGTCQEPSPR</sequence>
<name>ISK1_STRCA</name>
<dbReference type="SMR" id="Q9PSM2"/>
<dbReference type="GO" id="GO:0005576">
    <property type="term" value="C:extracellular region"/>
    <property type="evidence" value="ECO:0007669"/>
    <property type="project" value="UniProtKB-SubCell"/>
</dbReference>
<dbReference type="GO" id="GO:0004867">
    <property type="term" value="F:serine-type endopeptidase inhibitor activity"/>
    <property type="evidence" value="ECO:0007669"/>
    <property type="project" value="UniProtKB-KW"/>
</dbReference>
<dbReference type="CDD" id="cd01327">
    <property type="entry name" value="KAZAL_PSTI"/>
    <property type="match status" value="1"/>
</dbReference>
<dbReference type="Gene3D" id="3.30.60.30">
    <property type="match status" value="1"/>
</dbReference>
<dbReference type="InterPro" id="IPR002350">
    <property type="entry name" value="Kazal_dom"/>
</dbReference>
<dbReference type="InterPro" id="IPR036058">
    <property type="entry name" value="Kazal_dom_sf"/>
</dbReference>
<dbReference type="PANTHER" id="PTHR21312">
    <property type="entry name" value="SERINE PROTEASE INHIBITOR"/>
    <property type="match status" value="1"/>
</dbReference>
<dbReference type="PANTHER" id="PTHR21312:SF27">
    <property type="entry name" value="SERINE PROTEASE INHIBITOR KAZAL-TYPE 1"/>
    <property type="match status" value="1"/>
</dbReference>
<dbReference type="Pfam" id="PF00050">
    <property type="entry name" value="Kazal_1"/>
    <property type="match status" value="1"/>
</dbReference>
<dbReference type="SMART" id="SM00280">
    <property type="entry name" value="KAZAL"/>
    <property type="match status" value="1"/>
</dbReference>
<dbReference type="SUPFAM" id="SSF100895">
    <property type="entry name" value="Kazal-type serine protease inhibitors"/>
    <property type="match status" value="1"/>
</dbReference>
<dbReference type="PROSITE" id="PS00282">
    <property type="entry name" value="KAZAL_1"/>
    <property type="match status" value="1"/>
</dbReference>
<dbReference type="PROSITE" id="PS51465">
    <property type="entry name" value="KAZAL_2"/>
    <property type="match status" value="1"/>
</dbReference>
<reference key="1">
    <citation type="journal article" date="1996" name="Int. J. Pept. Protein Res.">
        <title>Purification and characterization of ostrich pancreatic secretory trypsin inhibitor.</title>
        <authorList>
            <person name="Zhao M."/>
            <person name="Naude R.J."/>
            <person name="Muramoto K."/>
            <person name="Oelofsen W."/>
        </authorList>
    </citation>
    <scope>PROTEIN SEQUENCE</scope>
    <source>
        <tissue>Pancreas</tissue>
    </source>
</reference>
<proteinExistence type="evidence at protein level"/>
<evidence type="ECO:0000255" key="1">
    <source>
        <dbReference type="PROSITE-ProRule" id="PRU00798"/>
    </source>
</evidence>
<organism>
    <name type="scientific">Struthio camelus</name>
    <name type="common">Common ostrich</name>
    <dbReference type="NCBI Taxonomy" id="8801"/>
    <lineage>
        <taxon>Eukaryota</taxon>
        <taxon>Metazoa</taxon>
        <taxon>Chordata</taxon>
        <taxon>Craniata</taxon>
        <taxon>Vertebrata</taxon>
        <taxon>Euteleostomi</taxon>
        <taxon>Archelosauria</taxon>
        <taxon>Archosauria</taxon>
        <taxon>Dinosauria</taxon>
        <taxon>Saurischia</taxon>
        <taxon>Theropoda</taxon>
        <taxon>Coelurosauria</taxon>
        <taxon>Aves</taxon>
        <taxon>Palaeognathae</taxon>
        <taxon>Struthioniformes</taxon>
        <taxon>Struthionidae</taxon>
        <taxon>Struthio</taxon>
    </lineage>
</organism>
<accession>Q9PSM2</accession>
<protein>
    <recommendedName>
        <fullName>Pancreatic secretory trypsin inhibitor</fullName>
    </recommendedName>
    <alternativeName>
        <fullName>Serine protease inhibitor Kazal-type 1</fullName>
    </alternativeName>
</protein>
<comment type="function">
    <text>This is a trypsin inhibitor, its physiological function is to prevent the trypsin-catalyzed premature activation of zymogens within the pancreas.</text>
</comment>
<comment type="subcellular location">
    <subcellularLocation>
        <location>Secreted</location>
    </subcellularLocation>
</comment>
<keyword id="KW-0903">Direct protein sequencing</keyword>
<keyword id="KW-1015">Disulfide bond</keyword>
<keyword id="KW-0646">Protease inhibitor</keyword>
<keyword id="KW-0964">Secreted</keyword>
<keyword id="KW-0722">Serine protease inhibitor</keyword>
<gene>
    <name type="primary">SPINK1</name>
    <name type="synonym">PSTI</name>
</gene>